<dbReference type="EC" id="2.1.1.166" evidence="1"/>
<dbReference type="EMBL" id="CP000300">
    <property type="protein sequence ID" value="ABE52113.1"/>
    <property type="molecule type" value="Genomic_DNA"/>
</dbReference>
<dbReference type="RefSeq" id="WP_011499259.1">
    <property type="nucleotide sequence ID" value="NC_007955.1"/>
</dbReference>
<dbReference type="SMR" id="Q12WR3"/>
<dbReference type="STRING" id="259564.Mbur_1190"/>
<dbReference type="GeneID" id="3998346"/>
<dbReference type="KEGG" id="mbu:Mbur_1190"/>
<dbReference type="HOGENOM" id="CLU_009422_4_4_2"/>
<dbReference type="OrthoDB" id="26307at2157"/>
<dbReference type="Proteomes" id="UP000001979">
    <property type="component" value="Chromosome"/>
</dbReference>
<dbReference type="GO" id="GO:0005737">
    <property type="term" value="C:cytoplasm"/>
    <property type="evidence" value="ECO:0007669"/>
    <property type="project" value="UniProtKB-SubCell"/>
</dbReference>
<dbReference type="GO" id="GO:0008650">
    <property type="term" value="F:rRNA (uridine-2'-O-)-methyltransferase activity"/>
    <property type="evidence" value="ECO:0007669"/>
    <property type="project" value="UniProtKB-UniRule"/>
</dbReference>
<dbReference type="Gene3D" id="2.40.50.140">
    <property type="entry name" value="Nucleic acid-binding proteins"/>
    <property type="match status" value="1"/>
</dbReference>
<dbReference type="Gene3D" id="3.40.50.150">
    <property type="entry name" value="Vaccinia Virus protein VP39"/>
    <property type="match status" value="1"/>
</dbReference>
<dbReference type="HAMAP" id="MF_01547">
    <property type="entry name" value="RNA_methyltr_E"/>
    <property type="match status" value="1"/>
</dbReference>
<dbReference type="InterPro" id="IPR012340">
    <property type="entry name" value="NA-bd_OB-fold"/>
</dbReference>
<dbReference type="InterPro" id="IPR050082">
    <property type="entry name" value="RNA_methyltr_RlmE"/>
</dbReference>
<dbReference type="InterPro" id="IPR002877">
    <property type="entry name" value="RNA_MeTrfase_FtsJ_dom"/>
</dbReference>
<dbReference type="InterPro" id="IPR015507">
    <property type="entry name" value="rRNA-MeTfrase_E"/>
</dbReference>
<dbReference type="InterPro" id="IPR029063">
    <property type="entry name" value="SAM-dependent_MTases_sf"/>
</dbReference>
<dbReference type="InterPro" id="IPR002792">
    <property type="entry name" value="TRAM_dom"/>
</dbReference>
<dbReference type="PANTHER" id="PTHR10920:SF13">
    <property type="entry name" value="PRE-RRNA 2'-O-RIBOSE RNA METHYLTRANSFERASE FTSJ3"/>
    <property type="match status" value="1"/>
</dbReference>
<dbReference type="PANTHER" id="PTHR10920">
    <property type="entry name" value="RIBOSOMAL RNA METHYLTRANSFERASE"/>
    <property type="match status" value="1"/>
</dbReference>
<dbReference type="Pfam" id="PF01728">
    <property type="entry name" value="FtsJ"/>
    <property type="match status" value="1"/>
</dbReference>
<dbReference type="Pfam" id="PF01938">
    <property type="entry name" value="TRAM"/>
    <property type="match status" value="1"/>
</dbReference>
<dbReference type="SUPFAM" id="SSF50249">
    <property type="entry name" value="Nucleic acid-binding proteins"/>
    <property type="match status" value="1"/>
</dbReference>
<dbReference type="SUPFAM" id="SSF53335">
    <property type="entry name" value="S-adenosyl-L-methionine-dependent methyltransferases"/>
    <property type="match status" value="1"/>
</dbReference>
<dbReference type="PROSITE" id="PS50926">
    <property type="entry name" value="TRAM"/>
    <property type="match status" value="1"/>
</dbReference>
<protein>
    <recommendedName>
        <fullName evidence="1">Ribosomal RNA large subunit methyltransferase E</fullName>
        <ecNumber evidence="1">2.1.1.166</ecNumber>
    </recommendedName>
    <alternativeName>
        <fullName evidence="1">23S rRNA Um2552 methyltransferase</fullName>
    </alternativeName>
    <alternativeName>
        <fullName evidence="1">rRNA (uridine-2'-O-)-methyltransferase</fullName>
    </alternativeName>
</protein>
<keyword id="KW-0963">Cytoplasm</keyword>
<keyword id="KW-0489">Methyltransferase</keyword>
<keyword id="KW-0698">rRNA processing</keyword>
<keyword id="KW-0949">S-adenosyl-L-methionine</keyword>
<keyword id="KW-0808">Transferase</keyword>
<feature type="chain" id="PRO_0000282818" description="Ribosomal RNA large subunit methyltransferase E">
    <location>
        <begin position="1"/>
        <end position="267"/>
    </location>
</feature>
<feature type="domain" description="TRAM" evidence="1">
    <location>
        <begin position="196"/>
        <end position="255"/>
    </location>
</feature>
<feature type="active site" description="Proton acceptor" evidence="1">
    <location>
        <position position="149"/>
    </location>
</feature>
<feature type="binding site" evidence="1">
    <location>
        <position position="50"/>
    </location>
    <ligand>
        <name>S-adenosyl-L-methionine</name>
        <dbReference type="ChEBI" id="CHEBI:59789"/>
    </ligand>
</feature>
<feature type="binding site" evidence="1">
    <location>
        <position position="52"/>
    </location>
    <ligand>
        <name>S-adenosyl-L-methionine</name>
        <dbReference type="ChEBI" id="CHEBI:59789"/>
    </ligand>
</feature>
<feature type="binding site" evidence="1">
    <location>
        <position position="68"/>
    </location>
    <ligand>
        <name>S-adenosyl-L-methionine</name>
        <dbReference type="ChEBI" id="CHEBI:59789"/>
    </ligand>
</feature>
<feature type="binding site" evidence="1">
    <location>
        <position position="84"/>
    </location>
    <ligand>
        <name>S-adenosyl-L-methionine</name>
        <dbReference type="ChEBI" id="CHEBI:59789"/>
    </ligand>
</feature>
<feature type="binding site" evidence="1">
    <location>
        <position position="109"/>
    </location>
    <ligand>
        <name>S-adenosyl-L-methionine</name>
        <dbReference type="ChEBI" id="CHEBI:59789"/>
    </ligand>
</feature>
<organism>
    <name type="scientific">Methanococcoides burtonii (strain DSM 6242 / NBRC 107633 / OCM 468 / ACE-M)</name>
    <dbReference type="NCBI Taxonomy" id="259564"/>
    <lineage>
        <taxon>Archaea</taxon>
        <taxon>Methanobacteriati</taxon>
        <taxon>Methanobacteriota</taxon>
        <taxon>Stenosarchaea group</taxon>
        <taxon>Methanomicrobia</taxon>
        <taxon>Methanosarcinales</taxon>
        <taxon>Methanosarcinaceae</taxon>
        <taxon>Methanococcoides</taxon>
    </lineage>
</organism>
<proteinExistence type="inferred from homology"/>
<evidence type="ECO:0000255" key="1">
    <source>
        <dbReference type="HAMAP-Rule" id="MF_01547"/>
    </source>
</evidence>
<reference key="1">
    <citation type="journal article" date="2009" name="ISME J.">
        <title>The genome sequence of the psychrophilic archaeon, Methanococcoides burtonii: the role of genome evolution in cold adaptation.</title>
        <authorList>
            <person name="Allen M.A."/>
            <person name="Lauro F.M."/>
            <person name="Williams T.J."/>
            <person name="Burg D."/>
            <person name="Siddiqui K.S."/>
            <person name="De Francisci D."/>
            <person name="Chong K.W."/>
            <person name="Pilak O."/>
            <person name="Chew H.H."/>
            <person name="De Maere M.Z."/>
            <person name="Ting L."/>
            <person name="Katrib M."/>
            <person name="Ng C."/>
            <person name="Sowers K.R."/>
            <person name="Galperin M.Y."/>
            <person name="Anderson I.J."/>
            <person name="Ivanova N."/>
            <person name="Dalin E."/>
            <person name="Martinez M."/>
            <person name="Lapidus A."/>
            <person name="Hauser L."/>
            <person name="Land M."/>
            <person name="Thomas T."/>
            <person name="Cavicchioli R."/>
        </authorList>
    </citation>
    <scope>NUCLEOTIDE SEQUENCE [LARGE SCALE GENOMIC DNA]</scope>
    <source>
        <strain>DSM 6242 / NBRC 107633 / OCM 468 / ACE-M</strain>
    </source>
</reference>
<sequence>MARDRRDTYYWRAKDEGYRSRAAYKLFQINEKHEVIKEDDTIVDLGAAPGGWLEVAKKISGGKIVGVDLRRIKEIEGVETIKGDITSDETIKKIIELVGEGGADVVICDAAPNLSGNWSLDHARSIDLTTSALECAKKILKPKGHFIVKVFQGDMFKEYMDKVRESFTYTRAFSPKASRPESAEIYVIGKKLLTAPLKIDDKFDVTIKKIGAKGNGIAFVEDFVVFMQDEVKKGENVRIKIVDVKPEFAFAIVIGRYDEELNEKNEE</sequence>
<comment type="function">
    <text evidence="1">Specifically methylates the uridine in position 2552 of 23S rRNA at the 2'-O position of the ribose in the fully assembled 50S ribosomal subunit.</text>
</comment>
<comment type="catalytic activity">
    <reaction evidence="1">
        <text>uridine(2552) in 23S rRNA + S-adenosyl-L-methionine = 2'-O-methyluridine(2552) in 23S rRNA + S-adenosyl-L-homocysteine + H(+)</text>
        <dbReference type="Rhea" id="RHEA:42720"/>
        <dbReference type="Rhea" id="RHEA-COMP:10202"/>
        <dbReference type="Rhea" id="RHEA-COMP:10203"/>
        <dbReference type="ChEBI" id="CHEBI:15378"/>
        <dbReference type="ChEBI" id="CHEBI:57856"/>
        <dbReference type="ChEBI" id="CHEBI:59789"/>
        <dbReference type="ChEBI" id="CHEBI:65315"/>
        <dbReference type="ChEBI" id="CHEBI:74478"/>
        <dbReference type="EC" id="2.1.1.166"/>
    </reaction>
</comment>
<comment type="subcellular location">
    <subcellularLocation>
        <location evidence="1">Cytoplasm</location>
    </subcellularLocation>
</comment>
<comment type="similarity">
    <text evidence="1">Belongs to the class I-like SAM-binding methyltransferase superfamily. RNA methyltransferase RlmE family.</text>
</comment>
<gene>
    <name evidence="1" type="primary">rlmE</name>
    <name evidence="1" type="synonym">rrmJ</name>
    <name type="ordered locus">Mbur_1190</name>
</gene>
<name>RLME_METBU</name>
<accession>Q12WR3</accession>